<feature type="chain" id="PRO_0000049036" description="Homeobox protein DLL-1">
    <location>
        <begin position="1"/>
        <end position="250"/>
    </location>
</feature>
<feature type="DNA-binding region" description="Homeobox" evidence="1">
    <location>
        <begin position="125"/>
        <end position="184"/>
    </location>
</feature>
<feature type="region of interest" description="Disordered" evidence="2">
    <location>
        <begin position="40"/>
        <end position="66"/>
    </location>
</feature>
<feature type="region of interest" description="Disordered" evidence="2">
    <location>
        <begin position="84"/>
        <end position="106"/>
    </location>
</feature>
<feature type="compositionally biased region" description="Polar residues" evidence="2">
    <location>
        <begin position="84"/>
        <end position="98"/>
    </location>
</feature>
<gene>
    <name type="primary">dll1</name>
</gene>
<evidence type="ECO:0000255" key="1">
    <source>
        <dbReference type="PROSITE-ProRule" id="PRU00108"/>
    </source>
</evidence>
<evidence type="ECO:0000256" key="2">
    <source>
        <dbReference type="SAM" id="MobiDB-lite"/>
    </source>
</evidence>
<evidence type="ECO:0000305" key="3"/>
<keyword id="KW-0217">Developmental protein</keyword>
<keyword id="KW-0238">DNA-binding</keyword>
<keyword id="KW-0371">Homeobox</keyword>
<keyword id="KW-0539">Nucleus</keyword>
<keyword id="KW-1185">Reference proteome</keyword>
<proteinExistence type="evidence at transcript level"/>
<accession>P53773</accession>
<sequence length="250" mass="28038">MTTMADGLEAQDSSKSAFMEFGQQQSHSQQSSPVMAAGHYPSLHCLHSGSHHHPQHQHDTNYSGSNSYSRSLAAYPYMSHSQHSPYLQSCNSNTTTQSRAEEPDQQKTTVIENGEIRFNGKGKKIRKPRTIYSSLQLQALNHRFQQTQYLALPERAELAASLGVTQTQVKIWFQNKRSKYKKLIKQGNNPLEIDQLAGTVALSPRSPAIPPVWDVSASKGVSMAPNSYMPGYSHWYSSPHQDTMQRSQMM</sequence>
<name>DLL1_XENLA</name>
<protein>
    <recommendedName>
        <fullName>Homeobox protein DLL-1</fullName>
        <shortName>DLL</shortName>
        <shortName>XDLL</shortName>
    </recommendedName>
</protein>
<reference key="1">
    <citation type="journal article" date="1992" name="J. Biol. Chem.">
        <title>Isolation and characterization of a Xenopus cDNA which encodes a homeodomain highly homologous to Drosophila Distal-less.</title>
        <authorList>
            <person name="Asano M."/>
            <person name="Emori Y."/>
            <person name="Saigo K."/>
            <person name="Shiokawa K."/>
        </authorList>
    </citation>
    <scope>NUCLEOTIDE SEQUENCE [MRNA]</scope>
</reference>
<organism>
    <name type="scientific">Xenopus laevis</name>
    <name type="common">African clawed frog</name>
    <dbReference type="NCBI Taxonomy" id="8355"/>
    <lineage>
        <taxon>Eukaryota</taxon>
        <taxon>Metazoa</taxon>
        <taxon>Chordata</taxon>
        <taxon>Craniata</taxon>
        <taxon>Vertebrata</taxon>
        <taxon>Euteleostomi</taxon>
        <taxon>Amphibia</taxon>
        <taxon>Batrachia</taxon>
        <taxon>Anura</taxon>
        <taxon>Pipoidea</taxon>
        <taxon>Pipidae</taxon>
        <taxon>Xenopodinae</taxon>
        <taxon>Xenopus</taxon>
        <taxon>Xenopus</taxon>
    </lineage>
</organism>
<comment type="subcellular location">
    <subcellularLocation>
        <location evidence="1">Nucleus</location>
    </subcellularLocation>
</comment>
<comment type="similarity">
    <text evidence="3">Belongs to the distal-less homeobox family.</text>
</comment>
<dbReference type="EMBL" id="D10259">
    <property type="status" value="NOT_ANNOTATED_CDS"/>
    <property type="molecule type" value="mRNA"/>
</dbReference>
<dbReference type="PIR" id="A42103">
    <property type="entry name" value="A42103"/>
</dbReference>
<dbReference type="SMR" id="P53773"/>
<dbReference type="AGR" id="Xenbase:XB-GENE-6252964"/>
<dbReference type="Xenbase" id="XB-GENE-6252964">
    <property type="gene designation" value="dlx6.S"/>
</dbReference>
<dbReference type="Proteomes" id="UP000186698">
    <property type="component" value="Unplaced"/>
</dbReference>
<dbReference type="GO" id="GO:0005634">
    <property type="term" value="C:nucleus"/>
    <property type="evidence" value="ECO:0007669"/>
    <property type="project" value="UniProtKB-SubCell"/>
</dbReference>
<dbReference type="GO" id="GO:0000981">
    <property type="term" value="F:DNA-binding transcription factor activity, RNA polymerase II-specific"/>
    <property type="evidence" value="ECO:0000318"/>
    <property type="project" value="GO_Central"/>
</dbReference>
<dbReference type="GO" id="GO:0000978">
    <property type="term" value="F:RNA polymerase II cis-regulatory region sequence-specific DNA binding"/>
    <property type="evidence" value="ECO:0000318"/>
    <property type="project" value="GO_Central"/>
</dbReference>
<dbReference type="GO" id="GO:0030154">
    <property type="term" value="P:cell differentiation"/>
    <property type="evidence" value="ECO:0000318"/>
    <property type="project" value="GO_Central"/>
</dbReference>
<dbReference type="GO" id="GO:0048706">
    <property type="term" value="P:embryonic skeletal system development"/>
    <property type="evidence" value="ECO:0000318"/>
    <property type="project" value="GO_Central"/>
</dbReference>
<dbReference type="GO" id="GO:0006357">
    <property type="term" value="P:regulation of transcription by RNA polymerase II"/>
    <property type="evidence" value="ECO:0000318"/>
    <property type="project" value="GO_Central"/>
</dbReference>
<dbReference type="CDD" id="cd00086">
    <property type="entry name" value="homeodomain"/>
    <property type="match status" value="1"/>
</dbReference>
<dbReference type="FunFam" id="1.10.10.60:FF:000266">
    <property type="entry name" value="Distal-less homeobox 4a"/>
    <property type="match status" value="1"/>
</dbReference>
<dbReference type="Gene3D" id="1.10.10.60">
    <property type="entry name" value="Homeodomain-like"/>
    <property type="match status" value="1"/>
</dbReference>
<dbReference type="InterPro" id="IPR050460">
    <property type="entry name" value="Distal-less_Homeobox_TF"/>
</dbReference>
<dbReference type="InterPro" id="IPR001356">
    <property type="entry name" value="HD"/>
</dbReference>
<dbReference type="InterPro" id="IPR020479">
    <property type="entry name" value="HD_metazoa"/>
</dbReference>
<dbReference type="InterPro" id="IPR017970">
    <property type="entry name" value="Homeobox_CS"/>
</dbReference>
<dbReference type="InterPro" id="IPR009057">
    <property type="entry name" value="Homeodomain-like_sf"/>
</dbReference>
<dbReference type="InterPro" id="IPR000047">
    <property type="entry name" value="HTH_motif"/>
</dbReference>
<dbReference type="PANTHER" id="PTHR24327">
    <property type="entry name" value="HOMEOBOX PROTEIN"/>
    <property type="match status" value="1"/>
</dbReference>
<dbReference type="PANTHER" id="PTHR24327:SF26">
    <property type="entry name" value="HOMEOBOX PROTEIN DLX-6"/>
    <property type="match status" value="1"/>
</dbReference>
<dbReference type="Pfam" id="PF00046">
    <property type="entry name" value="Homeodomain"/>
    <property type="match status" value="1"/>
</dbReference>
<dbReference type="PRINTS" id="PR00024">
    <property type="entry name" value="HOMEOBOX"/>
</dbReference>
<dbReference type="PRINTS" id="PR00031">
    <property type="entry name" value="HTHREPRESSR"/>
</dbReference>
<dbReference type="SMART" id="SM00389">
    <property type="entry name" value="HOX"/>
    <property type="match status" value="1"/>
</dbReference>
<dbReference type="SUPFAM" id="SSF46689">
    <property type="entry name" value="Homeodomain-like"/>
    <property type="match status" value="1"/>
</dbReference>
<dbReference type="PROSITE" id="PS00027">
    <property type="entry name" value="HOMEOBOX_1"/>
    <property type="match status" value="1"/>
</dbReference>
<dbReference type="PROSITE" id="PS50071">
    <property type="entry name" value="HOMEOBOX_2"/>
    <property type="match status" value="1"/>
</dbReference>